<sequence length="134" mass="14510">MKSVFTISASLAISLMLCCTAQANDHKILGVIAMPRNETNDLALKLPVCRIVKRIQLSADHGDLQLSGASVYFKAARSASQSLNIPSEIKEGQTTDWININSDNDNKRCVSKITFSGHTVNSSDMATLKIIGDD</sequence>
<proteinExistence type="inferred from homology"/>
<evidence type="ECO:0000255" key="1">
    <source>
        <dbReference type="HAMAP-Rule" id="MF_01372"/>
    </source>
</evidence>
<comment type="similarity">
    <text evidence="1">Belongs to the UPF0412 family.</text>
</comment>
<name>YAAI_ECOLC</name>
<feature type="signal peptide" evidence="1">
    <location>
        <begin position="1"/>
        <end position="23"/>
    </location>
</feature>
<feature type="chain" id="PRO_5000313821" description="UPF0412 protein YaaI">
    <location>
        <begin position="24"/>
        <end position="134"/>
    </location>
</feature>
<gene>
    <name evidence="1" type="primary">yaaI</name>
    <name type="ordered locus">EcolC_3643</name>
</gene>
<keyword id="KW-0732">Signal</keyword>
<reference key="1">
    <citation type="submission" date="2008-02" db="EMBL/GenBank/DDBJ databases">
        <title>Complete sequence of Escherichia coli C str. ATCC 8739.</title>
        <authorList>
            <person name="Copeland A."/>
            <person name="Lucas S."/>
            <person name="Lapidus A."/>
            <person name="Glavina del Rio T."/>
            <person name="Dalin E."/>
            <person name="Tice H."/>
            <person name="Bruce D."/>
            <person name="Goodwin L."/>
            <person name="Pitluck S."/>
            <person name="Kiss H."/>
            <person name="Brettin T."/>
            <person name="Detter J.C."/>
            <person name="Han C."/>
            <person name="Kuske C.R."/>
            <person name="Schmutz J."/>
            <person name="Larimer F."/>
            <person name="Land M."/>
            <person name="Hauser L."/>
            <person name="Kyrpides N."/>
            <person name="Mikhailova N."/>
            <person name="Ingram L."/>
            <person name="Richardson P."/>
        </authorList>
    </citation>
    <scope>NUCLEOTIDE SEQUENCE [LARGE SCALE GENOMIC DNA]</scope>
    <source>
        <strain>ATCC 8739 / DSM 1576 / NBRC 3972 / NCIMB 8545 / WDCM 00012 / Crooks</strain>
    </source>
</reference>
<protein>
    <recommendedName>
        <fullName evidence="1">UPF0412 protein YaaI</fullName>
    </recommendedName>
</protein>
<accession>B1IRG1</accession>
<organism>
    <name type="scientific">Escherichia coli (strain ATCC 8739 / DSM 1576 / NBRC 3972 / NCIMB 8545 / WDCM 00012 / Crooks)</name>
    <dbReference type="NCBI Taxonomy" id="481805"/>
    <lineage>
        <taxon>Bacteria</taxon>
        <taxon>Pseudomonadati</taxon>
        <taxon>Pseudomonadota</taxon>
        <taxon>Gammaproteobacteria</taxon>
        <taxon>Enterobacterales</taxon>
        <taxon>Enterobacteriaceae</taxon>
        <taxon>Escherichia</taxon>
    </lineage>
</organism>
<dbReference type="EMBL" id="CP000946">
    <property type="protein sequence ID" value="ACA79254.1"/>
    <property type="molecule type" value="Genomic_DNA"/>
</dbReference>
<dbReference type="RefSeq" id="WP_000843559.1">
    <property type="nucleotide sequence ID" value="NZ_MTFT01000024.1"/>
</dbReference>
<dbReference type="KEGG" id="ecl:EcolC_3643"/>
<dbReference type="HOGENOM" id="CLU_158661_0_0_6"/>
<dbReference type="HAMAP" id="MF_01372">
    <property type="entry name" value="UPF0412"/>
    <property type="match status" value="1"/>
</dbReference>
<dbReference type="InterPro" id="IPR020240">
    <property type="entry name" value="UPF0412_YaaI"/>
</dbReference>
<dbReference type="NCBIfam" id="NF007541">
    <property type="entry name" value="PRK10154.1"/>
    <property type="match status" value="1"/>
</dbReference>
<dbReference type="Pfam" id="PF10807">
    <property type="entry name" value="DUF2541"/>
    <property type="match status" value="1"/>
</dbReference>